<proteinExistence type="inferred from homology"/>
<accession>Q8XXT4</accession>
<dbReference type="EMBL" id="AL646052">
    <property type="protein sequence ID" value="CAD15731.1"/>
    <property type="molecule type" value="Genomic_DNA"/>
</dbReference>
<dbReference type="RefSeq" id="WP_011001964.1">
    <property type="nucleotide sequence ID" value="NC_003295.1"/>
</dbReference>
<dbReference type="SMR" id="Q8XXT4"/>
<dbReference type="STRING" id="267608.RSc2029"/>
<dbReference type="EnsemblBacteria" id="CAD15731">
    <property type="protein sequence ID" value="CAD15731"/>
    <property type="gene ID" value="RSc2029"/>
</dbReference>
<dbReference type="KEGG" id="rso:RSc2029"/>
<dbReference type="eggNOG" id="COG0378">
    <property type="taxonomic scope" value="Bacteria"/>
</dbReference>
<dbReference type="HOGENOM" id="CLU_072144_1_0_4"/>
<dbReference type="Proteomes" id="UP000001436">
    <property type="component" value="Chromosome"/>
</dbReference>
<dbReference type="GO" id="GO:0005737">
    <property type="term" value="C:cytoplasm"/>
    <property type="evidence" value="ECO:0007669"/>
    <property type="project" value="UniProtKB-SubCell"/>
</dbReference>
<dbReference type="GO" id="GO:0005525">
    <property type="term" value="F:GTP binding"/>
    <property type="evidence" value="ECO:0007669"/>
    <property type="project" value="UniProtKB-KW"/>
</dbReference>
<dbReference type="GO" id="GO:0003924">
    <property type="term" value="F:GTPase activity"/>
    <property type="evidence" value="ECO:0007669"/>
    <property type="project" value="InterPro"/>
</dbReference>
<dbReference type="GO" id="GO:0016151">
    <property type="term" value="F:nickel cation binding"/>
    <property type="evidence" value="ECO:0007669"/>
    <property type="project" value="UniProtKB-UniRule"/>
</dbReference>
<dbReference type="GO" id="GO:0043419">
    <property type="term" value="P:urea catabolic process"/>
    <property type="evidence" value="ECO:0007669"/>
    <property type="project" value="InterPro"/>
</dbReference>
<dbReference type="CDD" id="cd05540">
    <property type="entry name" value="UreG"/>
    <property type="match status" value="1"/>
</dbReference>
<dbReference type="FunFam" id="3.40.50.300:FF:000208">
    <property type="entry name" value="Urease accessory protein UreG"/>
    <property type="match status" value="1"/>
</dbReference>
<dbReference type="Gene3D" id="3.40.50.300">
    <property type="entry name" value="P-loop containing nucleotide triphosphate hydrolases"/>
    <property type="match status" value="1"/>
</dbReference>
<dbReference type="HAMAP" id="MF_01389">
    <property type="entry name" value="UreG"/>
    <property type="match status" value="1"/>
</dbReference>
<dbReference type="InterPro" id="IPR003495">
    <property type="entry name" value="CobW/HypB/UreG_nucleotide-bd"/>
</dbReference>
<dbReference type="InterPro" id="IPR027417">
    <property type="entry name" value="P-loop_NTPase"/>
</dbReference>
<dbReference type="InterPro" id="IPR004400">
    <property type="entry name" value="UreG"/>
</dbReference>
<dbReference type="NCBIfam" id="TIGR00101">
    <property type="entry name" value="ureG"/>
    <property type="match status" value="1"/>
</dbReference>
<dbReference type="PANTHER" id="PTHR31715">
    <property type="entry name" value="UREASE ACCESSORY PROTEIN G"/>
    <property type="match status" value="1"/>
</dbReference>
<dbReference type="PANTHER" id="PTHR31715:SF0">
    <property type="entry name" value="UREASE ACCESSORY PROTEIN G"/>
    <property type="match status" value="1"/>
</dbReference>
<dbReference type="Pfam" id="PF02492">
    <property type="entry name" value="cobW"/>
    <property type="match status" value="1"/>
</dbReference>
<dbReference type="PIRSF" id="PIRSF005624">
    <property type="entry name" value="Ni-bind_GTPase"/>
    <property type="match status" value="1"/>
</dbReference>
<dbReference type="SUPFAM" id="SSF52540">
    <property type="entry name" value="P-loop containing nucleoside triphosphate hydrolases"/>
    <property type="match status" value="1"/>
</dbReference>
<feature type="chain" id="PRO_0000347435" description="Urease accessory protein UreG">
    <location>
        <begin position="1"/>
        <end position="210"/>
    </location>
</feature>
<feature type="binding site" evidence="1">
    <location>
        <begin position="15"/>
        <end position="22"/>
    </location>
    <ligand>
        <name>GTP</name>
        <dbReference type="ChEBI" id="CHEBI:37565"/>
    </ligand>
</feature>
<evidence type="ECO:0000255" key="1">
    <source>
        <dbReference type="HAMAP-Rule" id="MF_01389"/>
    </source>
</evidence>
<gene>
    <name evidence="1" type="primary">ureG</name>
    <name type="ordered locus">RSc2029</name>
</gene>
<protein>
    <recommendedName>
        <fullName evidence="1">Urease accessory protein UreG</fullName>
    </recommendedName>
</protein>
<keyword id="KW-0143">Chaperone</keyword>
<keyword id="KW-0963">Cytoplasm</keyword>
<keyword id="KW-0342">GTP-binding</keyword>
<keyword id="KW-0996">Nickel insertion</keyword>
<keyword id="KW-0547">Nucleotide-binding</keyword>
<keyword id="KW-1185">Reference proteome</keyword>
<sequence length="210" mass="22450">MRTKKLPALRVGVGGPVGSGKTTLLEMLCKAMRERYDLVAITNDIYTKEDQRLLTLSGALPAERIMGVETGGCPHTAIREDASINLEAVDRMLARFPDADVVFIESGGDNLAATFSPELSDLTIYVIDVAGGEKIPRKGGPGITKSDLLIINKTDLAPYVGASLDVMASDARKMRGDRPFVMCNLKEQAGLDAVVRFIEQQGMLAAPAAG</sequence>
<name>UREG_RALN1</name>
<comment type="function">
    <text evidence="1">Facilitates the functional incorporation of the urease nickel metallocenter. This process requires GTP hydrolysis, probably effectuated by UreG.</text>
</comment>
<comment type="subunit">
    <text evidence="1">Homodimer. UreD, UreF and UreG form a complex that acts as a GTP-hydrolysis-dependent molecular chaperone, activating the urease apoprotein by helping to assemble the nickel containing metallocenter of UreC. The UreE protein probably delivers the nickel.</text>
</comment>
<comment type="subcellular location">
    <subcellularLocation>
        <location evidence="1">Cytoplasm</location>
    </subcellularLocation>
</comment>
<comment type="similarity">
    <text evidence="1">Belongs to the SIMIBI class G3E GTPase family. UreG subfamily.</text>
</comment>
<reference key="1">
    <citation type="journal article" date="2002" name="Nature">
        <title>Genome sequence of the plant pathogen Ralstonia solanacearum.</title>
        <authorList>
            <person name="Salanoubat M."/>
            <person name="Genin S."/>
            <person name="Artiguenave F."/>
            <person name="Gouzy J."/>
            <person name="Mangenot S."/>
            <person name="Arlat M."/>
            <person name="Billault A."/>
            <person name="Brottier P."/>
            <person name="Camus J.-C."/>
            <person name="Cattolico L."/>
            <person name="Chandler M."/>
            <person name="Choisne N."/>
            <person name="Claudel-Renard C."/>
            <person name="Cunnac S."/>
            <person name="Demange N."/>
            <person name="Gaspin C."/>
            <person name="Lavie M."/>
            <person name="Moisan A."/>
            <person name="Robert C."/>
            <person name="Saurin W."/>
            <person name="Schiex T."/>
            <person name="Siguier P."/>
            <person name="Thebault P."/>
            <person name="Whalen M."/>
            <person name="Wincker P."/>
            <person name="Levy M."/>
            <person name="Weissenbach J."/>
            <person name="Boucher C.A."/>
        </authorList>
    </citation>
    <scope>NUCLEOTIDE SEQUENCE [LARGE SCALE GENOMIC DNA]</scope>
    <source>
        <strain>ATCC BAA-1114 / GMI1000</strain>
    </source>
</reference>
<organism>
    <name type="scientific">Ralstonia nicotianae (strain ATCC BAA-1114 / GMI1000)</name>
    <name type="common">Ralstonia solanacearum</name>
    <dbReference type="NCBI Taxonomy" id="267608"/>
    <lineage>
        <taxon>Bacteria</taxon>
        <taxon>Pseudomonadati</taxon>
        <taxon>Pseudomonadota</taxon>
        <taxon>Betaproteobacteria</taxon>
        <taxon>Burkholderiales</taxon>
        <taxon>Burkholderiaceae</taxon>
        <taxon>Ralstonia</taxon>
        <taxon>Ralstonia solanacearum species complex</taxon>
    </lineage>
</organism>